<comment type="function">
    <text evidence="1 6">Translation factor that promotes translation elongation and termination, particularly upon ribosome stalling at specific amino acid sequence contexts (By similarity). Binds between the exit (E) and peptidyl (P) site of the ribosome and promotes rescue of stalled ribosome: specifically required for efficient translation of polyproline-containing peptides as well as other motifs that stall the ribosome (By similarity). Acts as a ribosome quality control (RQC) cofactor by joining the RQC complex to facilitate peptidyl transfer during CAT tailing step (By similarity). Involved in xylogenesis (PubMed:18304977).</text>
</comment>
<comment type="tissue specificity">
    <text evidence="5 6 10">Expressed in leaf vasculature and inflorescence stems. Present in xylem tissue but not in phloem, and in developing vessel members, but not in mature vessels members. Detected in anthers.</text>
</comment>
<comment type="developmental stage">
    <text evidence="7">Increases at the onset of leaf senescence.</text>
</comment>
<comment type="induction">
    <text evidence="8 9">Up-regulated at post-transcriptional level by iron deficiency.</text>
</comment>
<comment type="PTM">
    <text evidence="4">Lys-51 undergoes hypusination, a unique post-translational modification that consists in the addition of a butylamino group from spermidine to lysine side chain, leading to the formation of the unusual amino acid hypusine. eIF-5As are the only known proteins to undergo this modification, which is essential for their function.</text>
</comment>
<comment type="disruption phenotype">
    <text evidence="10">No visible phenotype, but presence of extra root protoxylem cell files.</text>
</comment>
<comment type="similarity">
    <text evidence="11">Belongs to the eIF-5A family.</text>
</comment>
<comment type="sequence caution" evidence="11">
    <conflict type="erroneous gene model prediction">
        <sequence resource="EMBL-CDS" id="AAF79401"/>
    </conflict>
</comment>
<keyword id="KW-0385">Hypusine</keyword>
<keyword id="KW-0396">Initiation factor</keyword>
<keyword id="KW-0597">Phosphoprotein</keyword>
<keyword id="KW-0648">Protein biosynthesis</keyword>
<keyword id="KW-1185">Reference proteome</keyword>
<gene>
    <name type="primary">ELF5A-1</name>
    <name type="ordered locus">At1g13950</name>
    <name type="ORF">F16A14.17</name>
    <name type="ORF">F7A19.4</name>
</gene>
<dbReference type="EMBL" id="AF296082">
    <property type="protein sequence ID" value="AAG53646.1"/>
    <property type="molecule type" value="mRNA"/>
</dbReference>
<dbReference type="EMBL" id="AC007576">
    <property type="protein sequence ID" value="AAD39281.1"/>
    <property type="molecule type" value="Genomic_DNA"/>
</dbReference>
<dbReference type="EMBL" id="AC068197">
    <property type="protein sequence ID" value="AAF79401.1"/>
    <property type="status" value="ALT_SEQ"/>
    <property type="molecule type" value="Genomic_DNA"/>
</dbReference>
<dbReference type="EMBL" id="CP002684">
    <property type="protein sequence ID" value="AEE29088.1"/>
    <property type="molecule type" value="Genomic_DNA"/>
</dbReference>
<dbReference type="EMBL" id="AY063780">
    <property type="protein sequence ID" value="AAL36087.1"/>
    <property type="molecule type" value="mRNA"/>
</dbReference>
<dbReference type="EMBL" id="AY117272">
    <property type="protein sequence ID" value="AAM51347.1"/>
    <property type="molecule type" value="mRNA"/>
</dbReference>
<dbReference type="PIR" id="F86272">
    <property type="entry name" value="F86272"/>
</dbReference>
<dbReference type="RefSeq" id="NP_172848.1">
    <property type="nucleotide sequence ID" value="NM_101261.3"/>
</dbReference>
<dbReference type="SMR" id="Q9XI91"/>
<dbReference type="BioGRID" id="23195">
    <property type="interactions" value="1"/>
</dbReference>
<dbReference type="FunCoup" id="Q9XI91">
    <property type="interactions" value="2517"/>
</dbReference>
<dbReference type="STRING" id="3702.Q9XI91"/>
<dbReference type="PaxDb" id="3702-AT1G13950.1"/>
<dbReference type="ProteomicsDB" id="250673"/>
<dbReference type="EnsemblPlants" id="AT1G13950.1">
    <property type="protein sequence ID" value="AT1G13950.1"/>
    <property type="gene ID" value="AT1G13950"/>
</dbReference>
<dbReference type="GeneID" id="837955"/>
<dbReference type="Gramene" id="AT1G13950.1">
    <property type="protein sequence ID" value="AT1G13950.1"/>
    <property type="gene ID" value="AT1G13950"/>
</dbReference>
<dbReference type="KEGG" id="ath:AT1G13950"/>
<dbReference type="Araport" id="AT1G13950"/>
<dbReference type="TAIR" id="AT1G13950">
    <property type="gene designation" value="ELF5A-1"/>
</dbReference>
<dbReference type="eggNOG" id="KOG3271">
    <property type="taxonomic scope" value="Eukaryota"/>
</dbReference>
<dbReference type="HOGENOM" id="CLU_102600_1_0_1"/>
<dbReference type="InParanoid" id="Q9XI91"/>
<dbReference type="OMA" id="CICIFEA"/>
<dbReference type="OrthoDB" id="1050333at2759"/>
<dbReference type="PhylomeDB" id="Q9XI91"/>
<dbReference type="PRO" id="PR:Q9XI91"/>
<dbReference type="Proteomes" id="UP000006548">
    <property type="component" value="Chromosome 1"/>
</dbReference>
<dbReference type="ExpressionAtlas" id="Q9XI91">
    <property type="expression patterns" value="baseline and differential"/>
</dbReference>
<dbReference type="GO" id="GO:0005576">
    <property type="term" value="C:extracellular region"/>
    <property type="evidence" value="ECO:0007005"/>
    <property type="project" value="TAIR"/>
</dbReference>
<dbReference type="GO" id="GO:0043022">
    <property type="term" value="F:ribosome binding"/>
    <property type="evidence" value="ECO:0007669"/>
    <property type="project" value="InterPro"/>
</dbReference>
<dbReference type="GO" id="GO:0003723">
    <property type="term" value="F:RNA binding"/>
    <property type="evidence" value="ECO:0007669"/>
    <property type="project" value="InterPro"/>
</dbReference>
<dbReference type="GO" id="GO:0003746">
    <property type="term" value="F:translation elongation factor activity"/>
    <property type="evidence" value="ECO:0007669"/>
    <property type="project" value="InterPro"/>
</dbReference>
<dbReference type="GO" id="GO:0003743">
    <property type="term" value="F:translation initiation factor activity"/>
    <property type="evidence" value="ECO:0007669"/>
    <property type="project" value="UniProtKB-KW"/>
</dbReference>
<dbReference type="GO" id="GO:0045901">
    <property type="term" value="P:positive regulation of translational elongation"/>
    <property type="evidence" value="ECO:0007669"/>
    <property type="project" value="InterPro"/>
</dbReference>
<dbReference type="GO" id="GO:0045905">
    <property type="term" value="P:positive regulation of translational termination"/>
    <property type="evidence" value="ECO:0007669"/>
    <property type="project" value="InterPro"/>
</dbReference>
<dbReference type="GO" id="GO:0010089">
    <property type="term" value="P:xylem development"/>
    <property type="evidence" value="ECO:0000315"/>
    <property type="project" value="TAIR"/>
</dbReference>
<dbReference type="CDD" id="cd04468">
    <property type="entry name" value="S1_eIF5A"/>
    <property type="match status" value="1"/>
</dbReference>
<dbReference type="FunFam" id="2.30.30.30:FF:000012">
    <property type="entry name" value="Eukaryotic translation initiation factor 5A"/>
    <property type="match status" value="1"/>
</dbReference>
<dbReference type="FunFam" id="2.40.50.140:FF:000034">
    <property type="entry name" value="Eukaryotic translation initiation factor 5A"/>
    <property type="match status" value="1"/>
</dbReference>
<dbReference type="Gene3D" id="2.30.30.30">
    <property type="match status" value="1"/>
</dbReference>
<dbReference type="Gene3D" id="2.40.50.140">
    <property type="entry name" value="Nucleic acid-binding proteins"/>
    <property type="match status" value="1"/>
</dbReference>
<dbReference type="InterPro" id="IPR001884">
    <property type="entry name" value="IF5A-like"/>
</dbReference>
<dbReference type="InterPro" id="IPR048670">
    <property type="entry name" value="IF5A-like_N"/>
</dbReference>
<dbReference type="InterPro" id="IPR012340">
    <property type="entry name" value="NA-bd_OB-fold"/>
</dbReference>
<dbReference type="InterPro" id="IPR014722">
    <property type="entry name" value="Rib_uL2_dom2"/>
</dbReference>
<dbReference type="InterPro" id="IPR019769">
    <property type="entry name" value="Trans_elong_IF5A_hypusine_site"/>
</dbReference>
<dbReference type="InterPro" id="IPR020189">
    <property type="entry name" value="Transl_elong_IF5A_C"/>
</dbReference>
<dbReference type="InterPro" id="IPR008991">
    <property type="entry name" value="Translation_prot_SH3-like_sf"/>
</dbReference>
<dbReference type="NCBIfam" id="TIGR00037">
    <property type="entry name" value="eIF_5A"/>
    <property type="match status" value="1"/>
</dbReference>
<dbReference type="PANTHER" id="PTHR11673">
    <property type="entry name" value="TRANSLATION INITIATION FACTOR 5A FAMILY MEMBER"/>
    <property type="match status" value="1"/>
</dbReference>
<dbReference type="Pfam" id="PF01287">
    <property type="entry name" value="eIF-5a"/>
    <property type="match status" value="1"/>
</dbReference>
<dbReference type="Pfam" id="PF21485">
    <property type="entry name" value="IF5A-like_N"/>
    <property type="match status" value="1"/>
</dbReference>
<dbReference type="PIRSF" id="PIRSF003025">
    <property type="entry name" value="eIF5A"/>
    <property type="match status" value="1"/>
</dbReference>
<dbReference type="SMART" id="SM01376">
    <property type="entry name" value="eIF-5a"/>
    <property type="match status" value="1"/>
</dbReference>
<dbReference type="SUPFAM" id="SSF50249">
    <property type="entry name" value="Nucleic acid-binding proteins"/>
    <property type="match status" value="1"/>
</dbReference>
<dbReference type="SUPFAM" id="SSF50104">
    <property type="entry name" value="Translation proteins SH3-like domain"/>
    <property type="match status" value="1"/>
</dbReference>
<dbReference type="PROSITE" id="PS00302">
    <property type="entry name" value="IF5A_HYPUSINE"/>
    <property type="match status" value="1"/>
</dbReference>
<sequence length="158" mass="17360">MSDEEHHFESSDAGASKTYPQQAGTIRKNGYIVIKNRPCKVVEVSTSKTGKHGHAKCHFVAIDIFTSKKLEDIVPSSHNCDVPHVNRTDYQLIDISEDGYVSLLTDNGSTKDDLKLPNDDTLLQQIKSGFDDGKDLVVSVMSAMGEEQINALKDIGPK</sequence>
<evidence type="ECO:0000250" key="1">
    <source>
        <dbReference type="UniProtKB" id="P23301"/>
    </source>
</evidence>
<evidence type="ECO:0000250" key="2">
    <source>
        <dbReference type="UniProtKB" id="Q93VP3"/>
    </source>
</evidence>
<evidence type="ECO:0000256" key="3">
    <source>
        <dbReference type="SAM" id="MobiDB-lite"/>
    </source>
</evidence>
<evidence type="ECO:0000269" key="4">
    <source>
    </source>
</evidence>
<evidence type="ECO:0000269" key="5">
    <source>
    </source>
</evidence>
<evidence type="ECO:0000269" key="6">
    <source>
    </source>
</evidence>
<evidence type="ECO:0000269" key="7">
    <source>
    </source>
</evidence>
<evidence type="ECO:0000269" key="8">
    <source>
    </source>
</evidence>
<evidence type="ECO:0000269" key="9">
    <source>
    </source>
</evidence>
<evidence type="ECO:0000269" key="10">
    <source>
    </source>
</evidence>
<evidence type="ECO:0000305" key="11"/>
<organism>
    <name type="scientific">Arabidopsis thaliana</name>
    <name type="common">Mouse-ear cress</name>
    <dbReference type="NCBI Taxonomy" id="3702"/>
    <lineage>
        <taxon>Eukaryota</taxon>
        <taxon>Viridiplantae</taxon>
        <taxon>Streptophyta</taxon>
        <taxon>Embryophyta</taxon>
        <taxon>Tracheophyta</taxon>
        <taxon>Spermatophyta</taxon>
        <taxon>Magnoliopsida</taxon>
        <taxon>eudicotyledons</taxon>
        <taxon>Gunneridae</taxon>
        <taxon>Pentapetalae</taxon>
        <taxon>rosids</taxon>
        <taxon>malvids</taxon>
        <taxon>Brassicales</taxon>
        <taxon>Brassicaceae</taxon>
        <taxon>Camelineae</taxon>
        <taxon>Arabidopsis</taxon>
    </lineage>
</organism>
<reference key="1">
    <citation type="journal article" date="2001" name="J. Biol. Chem.">
        <title>Isolation and characterization of senescence-induced cDNAs encoding deoxyhypusine synthase and eucaryotic translation initiation factor 5A from tomato.</title>
        <authorList>
            <person name="Wang T.-W."/>
            <person name="Lu L."/>
            <person name="Wang D."/>
            <person name="Thompson J.E."/>
        </authorList>
    </citation>
    <scope>NUCLEOTIDE SEQUENCE [MRNA]</scope>
    <scope>HYPUSINE AT LYS-51</scope>
</reference>
<reference key="2">
    <citation type="journal article" date="2000" name="Nature">
        <title>Sequence and analysis of chromosome 1 of the plant Arabidopsis thaliana.</title>
        <authorList>
            <person name="Theologis A."/>
            <person name="Ecker J.R."/>
            <person name="Palm C.J."/>
            <person name="Federspiel N.A."/>
            <person name="Kaul S."/>
            <person name="White O."/>
            <person name="Alonso J."/>
            <person name="Altafi H."/>
            <person name="Araujo R."/>
            <person name="Bowman C.L."/>
            <person name="Brooks S.Y."/>
            <person name="Buehler E."/>
            <person name="Chan A."/>
            <person name="Chao Q."/>
            <person name="Chen H."/>
            <person name="Cheuk R.F."/>
            <person name="Chin C.W."/>
            <person name="Chung M.K."/>
            <person name="Conn L."/>
            <person name="Conway A.B."/>
            <person name="Conway A.R."/>
            <person name="Creasy T.H."/>
            <person name="Dewar K."/>
            <person name="Dunn P."/>
            <person name="Etgu P."/>
            <person name="Feldblyum T.V."/>
            <person name="Feng J.-D."/>
            <person name="Fong B."/>
            <person name="Fujii C.Y."/>
            <person name="Gill J.E."/>
            <person name="Goldsmith A.D."/>
            <person name="Haas B."/>
            <person name="Hansen N.F."/>
            <person name="Hughes B."/>
            <person name="Huizar L."/>
            <person name="Hunter J.L."/>
            <person name="Jenkins J."/>
            <person name="Johnson-Hopson C."/>
            <person name="Khan S."/>
            <person name="Khaykin E."/>
            <person name="Kim C.J."/>
            <person name="Koo H.L."/>
            <person name="Kremenetskaia I."/>
            <person name="Kurtz D.B."/>
            <person name="Kwan A."/>
            <person name="Lam B."/>
            <person name="Langin-Hooper S."/>
            <person name="Lee A."/>
            <person name="Lee J.M."/>
            <person name="Lenz C.A."/>
            <person name="Li J.H."/>
            <person name="Li Y.-P."/>
            <person name="Lin X."/>
            <person name="Liu S.X."/>
            <person name="Liu Z.A."/>
            <person name="Luros J.S."/>
            <person name="Maiti R."/>
            <person name="Marziali A."/>
            <person name="Militscher J."/>
            <person name="Miranda M."/>
            <person name="Nguyen M."/>
            <person name="Nierman W.C."/>
            <person name="Osborne B.I."/>
            <person name="Pai G."/>
            <person name="Peterson J."/>
            <person name="Pham P.K."/>
            <person name="Rizzo M."/>
            <person name="Rooney T."/>
            <person name="Rowley D."/>
            <person name="Sakano H."/>
            <person name="Salzberg S.L."/>
            <person name="Schwartz J.R."/>
            <person name="Shinn P."/>
            <person name="Southwick A.M."/>
            <person name="Sun H."/>
            <person name="Tallon L.J."/>
            <person name="Tambunga G."/>
            <person name="Toriumi M.J."/>
            <person name="Town C.D."/>
            <person name="Utterback T."/>
            <person name="Van Aken S."/>
            <person name="Vaysberg M."/>
            <person name="Vysotskaia V.S."/>
            <person name="Walker M."/>
            <person name="Wu D."/>
            <person name="Yu G."/>
            <person name="Fraser C.M."/>
            <person name="Venter J.C."/>
            <person name="Davis R.W."/>
        </authorList>
    </citation>
    <scope>NUCLEOTIDE SEQUENCE [LARGE SCALE GENOMIC DNA]</scope>
    <source>
        <strain>cv. Columbia</strain>
    </source>
</reference>
<reference key="3">
    <citation type="journal article" date="2017" name="Plant J.">
        <title>Araport11: a complete reannotation of the Arabidopsis thaliana reference genome.</title>
        <authorList>
            <person name="Cheng C.Y."/>
            <person name="Krishnakumar V."/>
            <person name="Chan A.P."/>
            <person name="Thibaud-Nissen F."/>
            <person name="Schobel S."/>
            <person name="Town C.D."/>
        </authorList>
    </citation>
    <scope>GENOME REANNOTATION</scope>
    <source>
        <strain>cv. Columbia</strain>
    </source>
</reference>
<reference key="4">
    <citation type="journal article" date="2003" name="Science">
        <title>Empirical analysis of transcriptional activity in the Arabidopsis genome.</title>
        <authorList>
            <person name="Yamada K."/>
            <person name="Lim J."/>
            <person name="Dale J.M."/>
            <person name="Chen H."/>
            <person name="Shinn P."/>
            <person name="Palm C.J."/>
            <person name="Southwick A.M."/>
            <person name="Wu H.C."/>
            <person name="Kim C.J."/>
            <person name="Nguyen M."/>
            <person name="Pham P.K."/>
            <person name="Cheuk R.F."/>
            <person name="Karlin-Newmann G."/>
            <person name="Liu S.X."/>
            <person name="Lam B."/>
            <person name="Sakano H."/>
            <person name="Wu T."/>
            <person name="Yu G."/>
            <person name="Miranda M."/>
            <person name="Quach H.L."/>
            <person name="Tripp M."/>
            <person name="Chang C.H."/>
            <person name="Lee J.M."/>
            <person name="Toriumi M.J."/>
            <person name="Chan M.M."/>
            <person name="Tang C.C."/>
            <person name="Onodera C.S."/>
            <person name="Deng J.M."/>
            <person name="Akiyama K."/>
            <person name="Ansari Y."/>
            <person name="Arakawa T."/>
            <person name="Banh J."/>
            <person name="Banno F."/>
            <person name="Bowser L."/>
            <person name="Brooks S.Y."/>
            <person name="Carninci P."/>
            <person name="Chao Q."/>
            <person name="Choy N."/>
            <person name="Enju A."/>
            <person name="Goldsmith A.D."/>
            <person name="Gurjal M."/>
            <person name="Hansen N.F."/>
            <person name="Hayashizaki Y."/>
            <person name="Johnson-Hopson C."/>
            <person name="Hsuan V.W."/>
            <person name="Iida K."/>
            <person name="Karnes M."/>
            <person name="Khan S."/>
            <person name="Koesema E."/>
            <person name="Ishida J."/>
            <person name="Jiang P.X."/>
            <person name="Jones T."/>
            <person name="Kawai J."/>
            <person name="Kamiya A."/>
            <person name="Meyers C."/>
            <person name="Nakajima M."/>
            <person name="Narusaka M."/>
            <person name="Seki M."/>
            <person name="Sakurai T."/>
            <person name="Satou M."/>
            <person name="Tamse R."/>
            <person name="Vaysberg M."/>
            <person name="Wallender E.K."/>
            <person name="Wong C."/>
            <person name="Yamamura Y."/>
            <person name="Yuan S."/>
            <person name="Shinozaki K."/>
            <person name="Davis R.W."/>
            <person name="Theologis A."/>
            <person name="Ecker J.R."/>
        </authorList>
    </citation>
    <scope>NUCLEOTIDE SEQUENCE [LARGE SCALE MRNA]</scope>
    <source>
        <strain>cv. Columbia</strain>
    </source>
</reference>
<reference key="5">
    <citation type="journal article" date="2007" name="J. Plant Physiol.">
        <title>Leaf-specific suppression of deoxyhypusine synthase in Arabidopsis thaliana enhances growth without negative pleiotropic effects.</title>
        <authorList>
            <person name="Duguay J."/>
            <person name="Jamal S."/>
            <person name="Liu Z."/>
            <person name="Wang T.W."/>
            <person name="Thompson J.E."/>
        </authorList>
    </citation>
    <scope>TISSUE SPECIFICITY</scope>
</reference>
<reference key="6">
    <citation type="journal article" date="2008" name="J. Exp. Bot.">
        <title>Modulation of eIF5A1 expression alters xylem abundance in Arabidopsis thaliana.</title>
        <authorList>
            <person name="Liu Z."/>
            <person name="Duguay J."/>
            <person name="Ma F."/>
            <person name="Wang T.W."/>
            <person name="Tshin R."/>
            <person name="Hopkins M.T."/>
            <person name="McNamara L."/>
            <person name="Thompson J.E."/>
        </authorList>
    </citation>
    <scope>FUNCTION</scope>
    <scope>TISSUE SPECIFICITY</scope>
</reference>
<reference key="7">
    <citation type="journal article" date="2010" name="Plant Cell Environ.">
        <title>Arabidopsis eIF5A3 influences growth and the response to osmotic and nutrient stress.</title>
        <authorList>
            <person name="Ma F."/>
            <person name="Liu Z."/>
            <person name="Wang T.W."/>
            <person name="Hopkins M.T."/>
            <person name="Peterson C.A."/>
            <person name="Thompson J.E."/>
        </authorList>
    </citation>
    <scope>DEVELOPMENTAL STAGE</scope>
</reference>
<reference key="8">
    <citation type="journal article" date="2011" name="Plant Physiol.">
        <title>iTRAQ protein profile analysis of Arabidopsis roots reveals new aspects critical for iron homeostasis.</title>
        <authorList>
            <person name="Lan P."/>
            <person name="Li W."/>
            <person name="Wen T.N."/>
            <person name="Shiau J.Y."/>
            <person name="Wu Y.C."/>
            <person name="Lin W."/>
            <person name="Schmidt W."/>
        </authorList>
    </citation>
    <scope>INDUCTION BY IRON DEFICIENCY</scope>
</reference>
<reference key="9">
    <citation type="journal article" date="2011" name="Plant Signal. Behav.">
        <title>The enigma of eIF5A in the iron deficiency response of Arabidopsis.</title>
        <authorList>
            <person name="Lan P."/>
            <person name="Schmidt W."/>
        </authorList>
    </citation>
    <scope>INDUCTION BY IRON DEFICIENCY</scope>
</reference>
<reference key="10">
    <citation type="journal article" date="2013" name="Plant Cell">
        <title>The Arabidopsis eukaryotic translation initiation factor eIF5A-2 regulates root protoxylem development by modulating cytokinin signaling.</title>
        <authorList>
            <person name="Ren B."/>
            <person name="Chen Q."/>
            <person name="Hong S."/>
            <person name="Zhao W."/>
            <person name="Feng J."/>
            <person name="Feng H."/>
            <person name="Zuo J."/>
        </authorList>
    </citation>
    <scope>TISSUE SPECIFICITY</scope>
    <scope>DISRUPTION PHENOTYPE</scope>
    <source>
        <strain>cv. Columbia</strain>
    </source>
</reference>
<accession>Q9XI91</accession>
<accession>Q9LMG2</accession>
<feature type="chain" id="PRO_0000142463" description="Eukaryotic translation initiation factor 5A-1">
    <location>
        <begin position="1"/>
        <end position="158"/>
    </location>
</feature>
<feature type="region of interest" description="Disordered" evidence="3">
    <location>
        <begin position="1"/>
        <end position="21"/>
    </location>
</feature>
<feature type="compositionally biased region" description="Basic and acidic residues" evidence="3">
    <location>
        <begin position="1"/>
        <end position="10"/>
    </location>
</feature>
<feature type="modified residue" description="Phosphoserine" evidence="2">
    <location>
        <position position="2"/>
    </location>
</feature>
<feature type="modified residue" description="Hypusine" evidence="4">
    <location>
        <position position="51"/>
    </location>
</feature>
<proteinExistence type="evidence at protein level"/>
<protein>
    <recommendedName>
        <fullName>Eukaryotic translation initiation factor 5A-1</fullName>
        <shortName>AtELF5A-1</shortName>
        <shortName>eIF-5A-1</shortName>
    </recommendedName>
</protein>
<name>IF5A1_ARATH</name>